<protein>
    <recommendedName>
        <fullName>Probable leucine-rich repeat receptor-like protein kinase At2g33170</fullName>
        <ecNumber>2.7.11.1</ecNumber>
    </recommendedName>
</protein>
<evidence type="ECO:0000250" key="1">
    <source>
        <dbReference type="UniProtKB" id="C0LGT6"/>
    </source>
</evidence>
<evidence type="ECO:0000250" key="2">
    <source>
        <dbReference type="UniProtKB" id="O22476"/>
    </source>
</evidence>
<evidence type="ECO:0000250" key="3">
    <source>
        <dbReference type="UniProtKB" id="Q9M0G7"/>
    </source>
</evidence>
<evidence type="ECO:0000255" key="4"/>
<evidence type="ECO:0000255" key="5">
    <source>
        <dbReference type="PROSITE-ProRule" id="PRU00159"/>
    </source>
</evidence>
<evidence type="ECO:0000255" key="6">
    <source>
        <dbReference type="PROSITE-ProRule" id="PRU10027"/>
    </source>
</evidence>
<evidence type="ECO:0000305" key="7"/>
<dbReference type="EC" id="2.7.11.1"/>
<dbReference type="EMBL" id="AC002334">
    <property type="protein sequence ID" value="AAC04906.1"/>
    <property type="molecule type" value="Genomic_DNA"/>
</dbReference>
<dbReference type="EMBL" id="CP002685">
    <property type="protein sequence ID" value="AEC08793.1"/>
    <property type="molecule type" value="Genomic_DNA"/>
</dbReference>
<dbReference type="EMBL" id="CP002685">
    <property type="protein sequence ID" value="ANM61424.1"/>
    <property type="molecule type" value="Genomic_DNA"/>
</dbReference>
<dbReference type="EMBL" id="FJ708708">
    <property type="protein sequence ID" value="ACN59303.1"/>
    <property type="molecule type" value="mRNA"/>
</dbReference>
<dbReference type="PIR" id="B84742">
    <property type="entry name" value="B84742"/>
</dbReference>
<dbReference type="RefSeq" id="NP_001323641.1">
    <property type="nucleotide sequence ID" value="NM_001336424.1"/>
</dbReference>
<dbReference type="RefSeq" id="NP_180875.1">
    <property type="nucleotide sequence ID" value="NM_128876.4"/>
</dbReference>
<dbReference type="SMR" id="O49318"/>
<dbReference type="BioGRID" id="3225">
    <property type="interactions" value="7"/>
</dbReference>
<dbReference type="IntAct" id="O49318">
    <property type="interactions" value="5"/>
</dbReference>
<dbReference type="STRING" id="3702.O49318"/>
<dbReference type="GlyGen" id="O49318">
    <property type="glycosylation" value="16 sites"/>
</dbReference>
<dbReference type="PaxDb" id="3702-AT2G33170.1"/>
<dbReference type="ProteomicsDB" id="243063"/>
<dbReference type="EnsemblPlants" id="AT2G33170.1">
    <property type="protein sequence ID" value="AT2G33170.1"/>
    <property type="gene ID" value="AT2G33170"/>
</dbReference>
<dbReference type="EnsemblPlants" id="AT2G33170.2">
    <property type="protein sequence ID" value="AT2G33170.2"/>
    <property type="gene ID" value="AT2G33170"/>
</dbReference>
<dbReference type="GeneID" id="817878"/>
<dbReference type="Gramene" id="AT2G33170.1">
    <property type="protein sequence ID" value="AT2G33170.1"/>
    <property type="gene ID" value="AT2G33170"/>
</dbReference>
<dbReference type="Gramene" id="AT2G33170.2">
    <property type="protein sequence ID" value="AT2G33170.2"/>
    <property type="gene ID" value="AT2G33170"/>
</dbReference>
<dbReference type="KEGG" id="ath:AT2G33170"/>
<dbReference type="Araport" id="AT2G33170"/>
<dbReference type="TAIR" id="AT2G33170"/>
<dbReference type="eggNOG" id="ENOG502QPT1">
    <property type="taxonomic scope" value="Eukaryota"/>
</dbReference>
<dbReference type="HOGENOM" id="CLU_000288_22_1_1"/>
<dbReference type="InParanoid" id="O49318"/>
<dbReference type="OMA" id="WSTRFMI"/>
<dbReference type="PhylomeDB" id="O49318"/>
<dbReference type="PRO" id="PR:O49318"/>
<dbReference type="Proteomes" id="UP000006548">
    <property type="component" value="Chromosome 2"/>
</dbReference>
<dbReference type="ExpressionAtlas" id="O49318">
    <property type="expression patterns" value="baseline and differential"/>
</dbReference>
<dbReference type="GO" id="GO:0016020">
    <property type="term" value="C:membrane"/>
    <property type="evidence" value="ECO:0007669"/>
    <property type="project" value="UniProtKB-SubCell"/>
</dbReference>
<dbReference type="GO" id="GO:0005524">
    <property type="term" value="F:ATP binding"/>
    <property type="evidence" value="ECO:0007669"/>
    <property type="project" value="UniProtKB-KW"/>
</dbReference>
<dbReference type="GO" id="GO:0106310">
    <property type="term" value="F:protein serine kinase activity"/>
    <property type="evidence" value="ECO:0007669"/>
    <property type="project" value="RHEA"/>
</dbReference>
<dbReference type="GO" id="GO:0004674">
    <property type="term" value="F:protein serine/threonine kinase activity"/>
    <property type="evidence" value="ECO:0007669"/>
    <property type="project" value="UniProtKB-KW"/>
</dbReference>
<dbReference type="FunFam" id="3.30.200.20:FF:000309">
    <property type="entry name" value="Leucine-rich repeat receptor protein kinase MSP1"/>
    <property type="match status" value="1"/>
</dbReference>
<dbReference type="FunFam" id="1.10.510.10:FF:000365">
    <property type="entry name" value="Leucine-rich repeat receptor-like serine/threonine-protein kinase At1g17230"/>
    <property type="match status" value="1"/>
</dbReference>
<dbReference type="FunFam" id="3.80.10.10:FF:000177">
    <property type="entry name" value="Leucine-rich repeat receptor-like serine/threonine-protein kinase At1g17230"/>
    <property type="match status" value="1"/>
</dbReference>
<dbReference type="FunFam" id="3.80.10.10:FF:000627">
    <property type="entry name" value="Probable leucine-rich repeat receptor-like protein kinase At2g33170"/>
    <property type="match status" value="1"/>
</dbReference>
<dbReference type="FunFam" id="3.80.10.10:FF:000680">
    <property type="entry name" value="Probable leucine-rich repeat receptor-like protein kinase At2g33170"/>
    <property type="match status" value="1"/>
</dbReference>
<dbReference type="FunFam" id="3.80.10.10:FF:001995">
    <property type="entry name" value="Probable leucine-rich repeat receptor-like protein kinase At2g33170"/>
    <property type="match status" value="1"/>
</dbReference>
<dbReference type="Gene3D" id="3.30.200.20">
    <property type="entry name" value="Phosphorylase Kinase, domain 1"/>
    <property type="match status" value="1"/>
</dbReference>
<dbReference type="Gene3D" id="3.80.10.10">
    <property type="entry name" value="Ribonuclease Inhibitor"/>
    <property type="match status" value="5"/>
</dbReference>
<dbReference type="Gene3D" id="1.10.510.10">
    <property type="entry name" value="Transferase(Phosphotransferase) domain 1"/>
    <property type="match status" value="1"/>
</dbReference>
<dbReference type="InterPro" id="IPR011009">
    <property type="entry name" value="Kinase-like_dom_sf"/>
</dbReference>
<dbReference type="InterPro" id="IPR001611">
    <property type="entry name" value="Leu-rich_rpt"/>
</dbReference>
<dbReference type="InterPro" id="IPR003591">
    <property type="entry name" value="Leu-rich_rpt_typical-subtyp"/>
</dbReference>
<dbReference type="InterPro" id="IPR032675">
    <property type="entry name" value="LRR_dom_sf"/>
</dbReference>
<dbReference type="InterPro" id="IPR013210">
    <property type="entry name" value="LRR_N_plant-typ"/>
</dbReference>
<dbReference type="InterPro" id="IPR055414">
    <property type="entry name" value="LRR_R13L4/SHOC2-like"/>
</dbReference>
<dbReference type="InterPro" id="IPR051716">
    <property type="entry name" value="Plant_RL_S/T_kinase"/>
</dbReference>
<dbReference type="InterPro" id="IPR000719">
    <property type="entry name" value="Prot_kinase_dom"/>
</dbReference>
<dbReference type="InterPro" id="IPR008271">
    <property type="entry name" value="Ser/Thr_kinase_AS"/>
</dbReference>
<dbReference type="PANTHER" id="PTHR48053">
    <property type="entry name" value="LEUCINE RICH REPEAT FAMILY PROTEIN, EXPRESSED"/>
    <property type="match status" value="1"/>
</dbReference>
<dbReference type="PANTHER" id="PTHR48053:SF160">
    <property type="entry name" value="PROTEIN KINASE DOMAIN-CONTAINING PROTEIN"/>
    <property type="match status" value="1"/>
</dbReference>
<dbReference type="Pfam" id="PF00560">
    <property type="entry name" value="LRR_1"/>
    <property type="match status" value="7"/>
</dbReference>
<dbReference type="Pfam" id="PF23598">
    <property type="entry name" value="LRR_14"/>
    <property type="match status" value="2"/>
</dbReference>
<dbReference type="Pfam" id="PF08263">
    <property type="entry name" value="LRRNT_2"/>
    <property type="match status" value="1"/>
</dbReference>
<dbReference type="Pfam" id="PF00069">
    <property type="entry name" value="Pkinase"/>
    <property type="match status" value="1"/>
</dbReference>
<dbReference type="SMART" id="SM00369">
    <property type="entry name" value="LRR_TYP"/>
    <property type="match status" value="13"/>
</dbReference>
<dbReference type="SMART" id="SM00220">
    <property type="entry name" value="S_TKc"/>
    <property type="match status" value="1"/>
</dbReference>
<dbReference type="SUPFAM" id="SSF56112">
    <property type="entry name" value="Protein kinase-like (PK-like)"/>
    <property type="match status" value="1"/>
</dbReference>
<dbReference type="SUPFAM" id="SSF52047">
    <property type="entry name" value="RNI-like"/>
    <property type="match status" value="2"/>
</dbReference>
<dbReference type="PROSITE" id="PS50011">
    <property type="entry name" value="PROTEIN_KINASE_DOM"/>
    <property type="match status" value="1"/>
</dbReference>
<dbReference type="PROSITE" id="PS00108">
    <property type="entry name" value="PROTEIN_KINASE_ST"/>
    <property type="match status" value="1"/>
</dbReference>
<gene>
    <name type="ordered locus">At2g33170</name>
    <name type="ORF">F25I18.9</name>
</gene>
<accession>O49318</accession>
<feature type="signal peptide" evidence="4">
    <location>
        <begin position="1"/>
        <end position="32"/>
    </location>
</feature>
<feature type="chain" id="PRO_0000389453" description="Probable leucine-rich repeat receptor-like protein kinase At2g33170">
    <location>
        <begin position="33"/>
        <end position="1124"/>
    </location>
</feature>
<feature type="topological domain" description="Extracellular" evidence="4">
    <location>
        <begin position="33"/>
        <end position="752"/>
    </location>
</feature>
<feature type="transmembrane region" description="Helical" evidence="4">
    <location>
        <begin position="753"/>
        <end position="773"/>
    </location>
</feature>
<feature type="topological domain" description="Cytoplasmic" evidence="4">
    <location>
        <begin position="774"/>
        <end position="1124"/>
    </location>
</feature>
<feature type="repeat" description="LRR 1">
    <location>
        <begin position="86"/>
        <end position="109"/>
    </location>
</feature>
<feature type="repeat" description="LRR 2">
    <location>
        <begin position="110"/>
        <end position="132"/>
    </location>
</feature>
<feature type="repeat" description="LRR 3">
    <location>
        <begin position="134"/>
        <end position="156"/>
    </location>
</feature>
<feature type="repeat" description="LRR 4">
    <location>
        <begin position="158"/>
        <end position="180"/>
    </location>
</feature>
<feature type="repeat" description="LRR 5">
    <location>
        <begin position="182"/>
        <end position="205"/>
    </location>
</feature>
<feature type="repeat" description="LRR 6">
    <location>
        <begin position="206"/>
        <end position="228"/>
    </location>
</feature>
<feature type="repeat" description="LRR 7">
    <location>
        <begin position="230"/>
        <end position="252"/>
    </location>
</feature>
<feature type="repeat" description="LRR 8">
    <location>
        <begin position="254"/>
        <end position="277"/>
    </location>
</feature>
<feature type="repeat" description="LRR 9">
    <location>
        <begin position="278"/>
        <end position="300"/>
    </location>
</feature>
<feature type="repeat" description="LRR 10">
    <location>
        <begin position="302"/>
        <end position="325"/>
    </location>
</feature>
<feature type="repeat" description="LRR 11">
    <location>
        <begin position="326"/>
        <end position="348"/>
    </location>
</feature>
<feature type="repeat" description="LRR 12">
    <location>
        <begin position="350"/>
        <end position="371"/>
    </location>
</feature>
<feature type="repeat" description="LRR 13">
    <location>
        <begin position="374"/>
        <end position="397"/>
    </location>
</feature>
<feature type="repeat" description="LRR 14">
    <location>
        <begin position="398"/>
        <end position="420"/>
    </location>
</feature>
<feature type="repeat" description="LRR 15">
    <location>
        <begin position="422"/>
        <end position="444"/>
    </location>
</feature>
<feature type="repeat" description="LRR 16">
    <location>
        <begin position="446"/>
        <end position="468"/>
    </location>
</feature>
<feature type="repeat" description="LRR 17">
    <location>
        <begin position="470"/>
        <end position="491"/>
    </location>
</feature>
<feature type="repeat" description="LRR 18">
    <location>
        <begin position="494"/>
        <end position="516"/>
    </location>
</feature>
<feature type="repeat" description="LRR 19">
    <location>
        <begin position="518"/>
        <end position="540"/>
    </location>
</feature>
<feature type="repeat" description="LRR 20">
    <location>
        <begin position="542"/>
        <end position="564"/>
    </location>
</feature>
<feature type="repeat" description="LRR 21">
    <location>
        <begin position="566"/>
        <end position="588"/>
    </location>
</feature>
<feature type="repeat" description="LRR 22">
    <location>
        <begin position="590"/>
        <end position="613"/>
    </location>
</feature>
<feature type="repeat" description="LRR 23">
    <location>
        <begin position="614"/>
        <end position="636"/>
    </location>
</feature>
<feature type="repeat" description="LRR 24">
    <location>
        <begin position="638"/>
        <end position="661"/>
    </location>
</feature>
<feature type="repeat" description="LRR 25">
    <location>
        <begin position="663"/>
        <end position="686"/>
    </location>
</feature>
<feature type="repeat" description="LRR 26">
    <location>
        <begin position="687"/>
        <end position="709"/>
    </location>
</feature>
<feature type="domain" description="Protein kinase" evidence="5">
    <location>
        <begin position="819"/>
        <end position="1100"/>
    </location>
</feature>
<feature type="active site" description="Proton acceptor" evidence="5 6">
    <location>
        <position position="952"/>
    </location>
</feature>
<feature type="binding site" evidence="5">
    <location>
        <begin position="825"/>
        <end position="833"/>
    </location>
    <ligand>
        <name>ATP</name>
        <dbReference type="ChEBI" id="CHEBI:30616"/>
    </ligand>
</feature>
<feature type="binding site" evidence="5">
    <location>
        <position position="847"/>
    </location>
    <ligand>
        <name>ATP</name>
        <dbReference type="ChEBI" id="CHEBI:30616"/>
    </ligand>
</feature>
<feature type="modified residue" description="Phosphothreonine" evidence="2">
    <location>
        <position position="808"/>
    </location>
</feature>
<feature type="modified residue" description="Phosphothreonine" evidence="2">
    <location>
        <position position="816"/>
    </location>
</feature>
<feature type="modified residue" description="Phosphotyrosine" evidence="2">
    <location>
        <position position="901"/>
    </location>
</feature>
<feature type="modified residue" description="Phosphotyrosine" evidence="1">
    <location>
        <position position="939"/>
    </location>
</feature>
<feature type="modified residue" description="Phosphoserine" evidence="3">
    <location>
        <position position="986"/>
    </location>
</feature>
<feature type="modified residue" description="Phosphotyrosine" evidence="1">
    <location>
        <position position="994"/>
    </location>
</feature>
<feature type="modified residue" description="Phosphotyrosine" evidence="3">
    <location>
        <position position="1001"/>
    </location>
</feature>
<feature type="modified residue" description="Phosphothreonine" evidence="3">
    <location>
        <position position="1002"/>
    </location>
</feature>
<feature type="glycosylation site" description="N-linked (GlcNAc...) asparagine" evidence="4">
    <location>
        <position position="72"/>
    </location>
</feature>
<feature type="glycosylation site" description="N-linked (GlcNAc...) asparagine" evidence="4">
    <location>
        <position position="96"/>
    </location>
</feature>
<feature type="glycosylation site" description="N-linked (GlcNAc...) asparagine" evidence="4">
    <location>
        <position position="131"/>
    </location>
</feature>
<feature type="glycosylation site" description="N-linked (GlcNAc...) asparagine" evidence="4">
    <location>
        <position position="192"/>
    </location>
</feature>
<feature type="glycosylation site" description="N-linked (GlcNAc...) asparagine" evidence="4">
    <location>
        <position position="275"/>
    </location>
</feature>
<feature type="glycosylation site" description="N-linked (GlcNAc...) asparagine" evidence="4">
    <location>
        <position position="314"/>
    </location>
</feature>
<feature type="glycosylation site" description="N-linked (GlcNAc...) asparagine" evidence="4">
    <location>
        <position position="395"/>
    </location>
</feature>
<feature type="glycosylation site" description="N-linked (GlcNAc...) asparagine" evidence="4">
    <location>
        <position position="494"/>
    </location>
</feature>
<feature type="glycosylation site" description="N-linked (GlcNAc...) asparagine" evidence="4">
    <location>
        <position position="547"/>
    </location>
</feature>
<feature type="glycosylation site" description="N-linked (GlcNAc...) asparagine" evidence="4">
    <location>
        <position position="611"/>
    </location>
</feature>
<feature type="glycosylation site" description="N-linked (GlcNAc...) asparagine" evidence="4">
    <location>
        <position position="644"/>
    </location>
</feature>
<feature type="glycosylation site" description="N-linked (GlcNAc...) asparagine" evidence="4">
    <location>
        <position position="684"/>
    </location>
</feature>
<feature type="glycosylation site" description="N-linked (GlcNAc...) asparagine" evidence="4">
    <location>
        <position position="692"/>
    </location>
</feature>
<feature type="glycosylation site" description="N-linked (GlcNAc...) asparagine" evidence="4">
    <location>
        <position position="697"/>
    </location>
</feature>
<feature type="glycosylation site" description="N-linked (GlcNAc...) asparagine" evidence="4">
    <location>
        <position position="710"/>
    </location>
</feature>
<proteinExistence type="evidence at transcript level"/>
<sequence>MGWWIFEFKKESKSMFVGVLFLLTLLVWTSESLNSDGQFLLELKNRGFQDSLNRLHNWNGIDETPCNWIGVNCSSQGSSSSSNSLVVTSLDLSSMNLSGIVSPSIGGLVNLVYLNLAYNALTGDIPREIGNCSKLEVMFLNNNQFGGSIPVEINKLSQLRSFNICNNKLSGPLPEEIGDLYNLEELVAYTNNLTGPLPRSLGNLNKLTTFRAGQNDFSGNIPTEIGKCLNLKLLGLAQNFISGELPKEIGMLVKLQEVILWQNKFSGFIPKDIGNLTSLETLALYGNSLVGPIPSEIGNMKSLKKLYLYQNQLNGTIPKELGKLSKVMEIDFSENLLSGEIPVELSKISELRLLYLFQNKLTGIIPNELSKLRNLAKLDLSINSLTGPIPPGFQNLTSMRQLQLFHNSLSGVIPQGLGLYSPLWVVDFSENQLSGKIPPFICQQSNLILLNLGSNRIFGNIPPGVLRCKSLLQLRVVGNRLTGQFPTELCKLVNLSAIELDQNRFSGPLPPEIGTCQKLQRLHLAANQFSSNLPNEISKLSNLVTFNVSSNSLTGPIPSEIANCKMLQRLDLSRNSFIGSLPPELGSLHQLEILRLSENRFSGNIPFTIGNLTHLTELQMGGNLFSGSIPPQLGLLSSLQIAMNLSYNDFSGEIPPEIGNLHLLMYLSLNNNHLSGEIPTTFENLSSLLGCNFSYNNLTGQLPHTQIFQNMTLTSFLGNKGLCGGHLRSCDPSHSSWPHISSLKAGSARRGRIIIIVSSVIGGISLLLIAIVVHFLRNPVEPTAPYVHDKEPFFQESDIYFVPKERFTVKDILEATKGFHDSYIVGRGACGTVYKAVMPSGKTIAVKKLESNREGNNNNSNNTDNSFRAEILTLGKIRHRNIVRLYSFCYHQGSNSNLLLYEYMSRGSLGELLHGGKSHSMDWPTRFAIALGAAEGLAYLHHDCKPRIIHRDIKSNNILIDENFEAHVGDFGLAKVIDMPLSKSVSAVAGSYGYIAPEYAYTMKVTEKCDIYSFGVVLLELLTGKAPVQPLEQGGDLATWTRNHIRDHSLTSEILDPYLTKVEDDVILNHMITVTKIAVLCTKSSPSDRPTMREVVLMLIESGERAGKVIVSTTCSDLPPPAPP</sequence>
<organism>
    <name type="scientific">Arabidopsis thaliana</name>
    <name type="common">Mouse-ear cress</name>
    <dbReference type="NCBI Taxonomy" id="3702"/>
    <lineage>
        <taxon>Eukaryota</taxon>
        <taxon>Viridiplantae</taxon>
        <taxon>Streptophyta</taxon>
        <taxon>Embryophyta</taxon>
        <taxon>Tracheophyta</taxon>
        <taxon>Spermatophyta</taxon>
        <taxon>Magnoliopsida</taxon>
        <taxon>eudicotyledons</taxon>
        <taxon>Gunneridae</taxon>
        <taxon>Pentapetalae</taxon>
        <taxon>rosids</taxon>
        <taxon>malvids</taxon>
        <taxon>Brassicales</taxon>
        <taxon>Brassicaceae</taxon>
        <taxon>Camelineae</taxon>
        <taxon>Arabidopsis</taxon>
    </lineage>
</organism>
<reference key="1">
    <citation type="journal article" date="1999" name="Nature">
        <title>Sequence and analysis of chromosome 2 of the plant Arabidopsis thaliana.</title>
        <authorList>
            <person name="Lin X."/>
            <person name="Kaul S."/>
            <person name="Rounsley S.D."/>
            <person name="Shea T.P."/>
            <person name="Benito M.-I."/>
            <person name="Town C.D."/>
            <person name="Fujii C.Y."/>
            <person name="Mason T.M."/>
            <person name="Bowman C.L."/>
            <person name="Barnstead M.E."/>
            <person name="Feldblyum T.V."/>
            <person name="Buell C.R."/>
            <person name="Ketchum K.A."/>
            <person name="Lee J.J."/>
            <person name="Ronning C.M."/>
            <person name="Koo H.L."/>
            <person name="Moffat K.S."/>
            <person name="Cronin L.A."/>
            <person name="Shen M."/>
            <person name="Pai G."/>
            <person name="Van Aken S."/>
            <person name="Umayam L."/>
            <person name="Tallon L.J."/>
            <person name="Gill J.E."/>
            <person name="Adams M.D."/>
            <person name="Carrera A.J."/>
            <person name="Creasy T.H."/>
            <person name="Goodman H.M."/>
            <person name="Somerville C.R."/>
            <person name="Copenhaver G.P."/>
            <person name="Preuss D."/>
            <person name="Nierman W.C."/>
            <person name="White O."/>
            <person name="Eisen J.A."/>
            <person name="Salzberg S.L."/>
            <person name="Fraser C.M."/>
            <person name="Venter J.C."/>
        </authorList>
    </citation>
    <scope>NUCLEOTIDE SEQUENCE [LARGE SCALE GENOMIC DNA]</scope>
    <source>
        <strain>cv. Columbia</strain>
    </source>
</reference>
<reference key="2">
    <citation type="journal article" date="2017" name="Plant J.">
        <title>Araport11: a complete reannotation of the Arabidopsis thaliana reference genome.</title>
        <authorList>
            <person name="Cheng C.Y."/>
            <person name="Krishnakumar V."/>
            <person name="Chan A.P."/>
            <person name="Thibaud-Nissen F."/>
            <person name="Schobel S."/>
            <person name="Town C.D."/>
        </authorList>
    </citation>
    <scope>GENOME REANNOTATION</scope>
    <source>
        <strain>cv. Columbia</strain>
    </source>
</reference>
<reference key="3">
    <citation type="journal article" date="2010" name="BMC Genomics">
        <title>Genome-wide cloning and sequence analysis of leucine-rich repeat receptor-like protein kinase genes in Arabidopsis thaliana.</title>
        <authorList>
            <person name="Gou X."/>
            <person name="He K."/>
            <person name="Yang H."/>
            <person name="Yuan T."/>
            <person name="Lin H."/>
            <person name="Clouse S.D."/>
            <person name="Li J."/>
        </authorList>
    </citation>
    <scope>NUCLEOTIDE SEQUENCE [LARGE SCALE MRNA]</scope>
    <source>
        <strain>cv. Columbia</strain>
    </source>
</reference>
<name>Y2317_ARATH</name>
<comment type="catalytic activity">
    <reaction>
        <text>L-seryl-[protein] + ATP = O-phospho-L-seryl-[protein] + ADP + H(+)</text>
        <dbReference type="Rhea" id="RHEA:17989"/>
        <dbReference type="Rhea" id="RHEA-COMP:9863"/>
        <dbReference type="Rhea" id="RHEA-COMP:11604"/>
        <dbReference type="ChEBI" id="CHEBI:15378"/>
        <dbReference type="ChEBI" id="CHEBI:29999"/>
        <dbReference type="ChEBI" id="CHEBI:30616"/>
        <dbReference type="ChEBI" id="CHEBI:83421"/>
        <dbReference type="ChEBI" id="CHEBI:456216"/>
        <dbReference type="EC" id="2.7.11.1"/>
    </reaction>
</comment>
<comment type="catalytic activity">
    <reaction>
        <text>L-threonyl-[protein] + ATP = O-phospho-L-threonyl-[protein] + ADP + H(+)</text>
        <dbReference type="Rhea" id="RHEA:46608"/>
        <dbReference type="Rhea" id="RHEA-COMP:11060"/>
        <dbReference type="Rhea" id="RHEA-COMP:11605"/>
        <dbReference type="ChEBI" id="CHEBI:15378"/>
        <dbReference type="ChEBI" id="CHEBI:30013"/>
        <dbReference type="ChEBI" id="CHEBI:30616"/>
        <dbReference type="ChEBI" id="CHEBI:61977"/>
        <dbReference type="ChEBI" id="CHEBI:456216"/>
        <dbReference type="EC" id="2.7.11.1"/>
    </reaction>
</comment>
<comment type="subcellular location">
    <subcellularLocation>
        <location evidence="7">Membrane</location>
        <topology evidence="7">Single-pass type I membrane protein</topology>
    </subcellularLocation>
</comment>
<comment type="similarity">
    <text evidence="5">Belongs to the protein kinase superfamily. Ser/Thr protein kinase family.</text>
</comment>
<keyword id="KW-0067">ATP-binding</keyword>
<keyword id="KW-0325">Glycoprotein</keyword>
<keyword id="KW-0418">Kinase</keyword>
<keyword id="KW-0433">Leucine-rich repeat</keyword>
<keyword id="KW-0472">Membrane</keyword>
<keyword id="KW-0547">Nucleotide-binding</keyword>
<keyword id="KW-0597">Phosphoprotein</keyword>
<keyword id="KW-0675">Receptor</keyword>
<keyword id="KW-1185">Reference proteome</keyword>
<keyword id="KW-0677">Repeat</keyword>
<keyword id="KW-0723">Serine/threonine-protein kinase</keyword>
<keyword id="KW-0732">Signal</keyword>
<keyword id="KW-0808">Transferase</keyword>
<keyword id="KW-0812">Transmembrane</keyword>
<keyword id="KW-1133">Transmembrane helix</keyword>